<keyword id="KW-0472">Membrane</keyword>
<keyword id="KW-0479">Metal-binding</keyword>
<keyword id="KW-1185">Reference proteome</keyword>
<keyword id="KW-0732">Signal</keyword>
<keyword id="KW-0808">Transferase</keyword>
<keyword id="KW-0812">Transmembrane</keyword>
<keyword id="KW-1133">Transmembrane helix</keyword>
<keyword id="KW-0833">Ubl conjugation pathway</keyword>
<keyword id="KW-0862">Zinc</keyword>
<keyword id="KW-0863">Zinc-finger</keyword>
<comment type="function">
    <text evidence="4">E3 ubiquitin protein ligase that acts as a positive regulator of sugar signaling during early seedling development. Possesses E3 ligase activity in vitro.</text>
</comment>
<comment type="catalytic activity">
    <reaction>
        <text>S-ubiquitinyl-[E2 ubiquitin-conjugating enzyme]-L-cysteine + [acceptor protein]-L-lysine = [E2 ubiquitin-conjugating enzyme]-L-cysteine + N(6)-ubiquitinyl-[acceptor protein]-L-lysine.</text>
        <dbReference type="EC" id="2.3.2.27"/>
    </reaction>
</comment>
<comment type="pathway">
    <text>Protein modification; protein ubiquitination.</text>
</comment>
<comment type="subcellular location">
    <subcellularLocation>
        <location evidence="5">Membrane</location>
        <topology evidence="5">Multi-pass membrane protein</topology>
    </subcellularLocation>
</comment>
<comment type="tissue specificity">
    <text evidence="4">Expressed in roots, stems, leaves, flowers and siliques.</text>
</comment>
<comment type="disruption phenotype">
    <text evidence="4">Resistance to high concentrations of exogenous glucose and sucrose on early seedling development.</text>
</comment>
<comment type="sequence caution" evidence="5">
    <conflict type="erroneous gene model prediction">
        <sequence resource="EMBL-CDS" id="CAB41140"/>
    </conflict>
</comment>
<protein>
    <recommendedName>
        <fullName>E3 ubiquitin-protein ligase SIS3</fullName>
        <ecNumber>2.3.2.27</ecNumber>
    </recommendedName>
    <alternativeName>
        <fullName>Protein SUGAR INSENSITIVE 3</fullName>
    </alternativeName>
    <alternativeName>
        <fullName evidence="5">RING-type E3 ubiquitin transferase SIS3</fullName>
    </alternativeName>
</protein>
<evidence type="ECO:0000255" key="1"/>
<evidence type="ECO:0000255" key="2">
    <source>
        <dbReference type="PROSITE-ProRule" id="PRU00175"/>
    </source>
</evidence>
<evidence type="ECO:0000256" key="3">
    <source>
        <dbReference type="SAM" id="MobiDB-lite"/>
    </source>
</evidence>
<evidence type="ECO:0000269" key="4">
    <source>
    </source>
</evidence>
<evidence type="ECO:0000305" key="5"/>
<dbReference type="EC" id="2.3.2.27"/>
<dbReference type="EMBL" id="AL049658">
    <property type="protein sequence ID" value="CAB41140.1"/>
    <property type="status" value="ALT_SEQ"/>
    <property type="molecule type" value="Genomic_DNA"/>
</dbReference>
<dbReference type="EMBL" id="CP002686">
    <property type="protein sequence ID" value="AEE78354.1"/>
    <property type="molecule type" value="Genomic_DNA"/>
</dbReference>
<dbReference type="EMBL" id="AK117391">
    <property type="protein sequence ID" value="BAC42060.1"/>
    <property type="molecule type" value="mRNA"/>
</dbReference>
<dbReference type="PIR" id="T06684">
    <property type="entry name" value="T06684"/>
</dbReference>
<dbReference type="RefSeq" id="NP_190382.2">
    <property type="nucleotide sequence ID" value="NM_114668.3"/>
</dbReference>
<dbReference type="SMR" id="Q8GYT9"/>
<dbReference type="FunCoup" id="Q8GYT9">
    <property type="interactions" value="1626"/>
</dbReference>
<dbReference type="STRING" id="3702.Q8GYT9"/>
<dbReference type="PaxDb" id="3702-AT3G47990.1"/>
<dbReference type="ProteomicsDB" id="234550"/>
<dbReference type="EnsemblPlants" id="AT3G47990.1">
    <property type="protein sequence ID" value="AT3G47990.1"/>
    <property type="gene ID" value="AT3G47990"/>
</dbReference>
<dbReference type="GeneID" id="823954"/>
<dbReference type="Gramene" id="AT3G47990.1">
    <property type="protein sequence ID" value="AT3G47990.1"/>
    <property type="gene ID" value="AT3G47990"/>
</dbReference>
<dbReference type="KEGG" id="ath:AT3G47990"/>
<dbReference type="Araport" id="AT3G47990"/>
<dbReference type="TAIR" id="AT3G47990">
    <property type="gene designation" value="SIS3"/>
</dbReference>
<dbReference type="eggNOG" id="KOG0800">
    <property type="taxonomic scope" value="Eukaryota"/>
</dbReference>
<dbReference type="HOGENOM" id="CLU_041738_0_0_1"/>
<dbReference type="InParanoid" id="Q8GYT9"/>
<dbReference type="OMA" id="NDIFTRW"/>
<dbReference type="PhylomeDB" id="Q8GYT9"/>
<dbReference type="BRENDA" id="2.3.2.27">
    <property type="organism ID" value="399"/>
</dbReference>
<dbReference type="UniPathway" id="UPA00143"/>
<dbReference type="PRO" id="PR:Q8GYT9"/>
<dbReference type="Proteomes" id="UP000006548">
    <property type="component" value="Chromosome 3"/>
</dbReference>
<dbReference type="ExpressionAtlas" id="Q8GYT9">
    <property type="expression patterns" value="baseline and differential"/>
</dbReference>
<dbReference type="GO" id="GO:0016020">
    <property type="term" value="C:membrane"/>
    <property type="evidence" value="ECO:0007669"/>
    <property type="project" value="UniProtKB-SubCell"/>
</dbReference>
<dbReference type="GO" id="GO:0004842">
    <property type="term" value="F:ubiquitin-protein transferase activity"/>
    <property type="evidence" value="ECO:0000314"/>
    <property type="project" value="TAIR"/>
</dbReference>
<dbReference type="GO" id="GO:0008270">
    <property type="term" value="F:zinc ion binding"/>
    <property type="evidence" value="ECO:0007669"/>
    <property type="project" value="UniProtKB-KW"/>
</dbReference>
<dbReference type="GO" id="GO:0016567">
    <property type="term" value="P:protein ubiquitination"/>
    <property type="evidence" value="ECO:0000314"/>
    <property type="project" value="UniProtKB"/>
</dbReference>
<dbReference type="GO" id="GO:0010182">
    <property type="term" value="P:sugar mediated signaling pathway"/>
    <property type="evidence" value="ECO:0000315"/>
    <property type="project" value="TAIR"/>
</dbReference>
<dbReference type="CDD" id="cd23118">
    <property type="entry name" value="RING-H2_SIS3"/>
    <property type="match status" value="1"/>
</dbReference>
<dbReference type="FunFam" id="3.30.40.10:FF:000281">
    <property type="entry name" value="E3 ubiquitin-protein ligase SIS3"/>
    <property type="match status" value="1"/>
</dbReference>
<dbReference type="Gene3D" id="3.30.40.10">
    <property type="entry name" value="Zinc/RING finger domain, C3HC4 (zinc finger)"/>
    <property type="match status" value="1"/>
</dbReference>
<dbReference type="InterPro" id="IPR044793">
    <property type="entry name" value="SIS3"/>
</dbReference>
<dbReference type="InterPro" id="IPR001841">
    <property type="entry name" value="Znf_RING"/>
</dbReference>
<dbReference type="InterPro" id="IPR013083">
    <property type="entry name" value="Znf_RING/FYVE/PHD"/>
</dbReference>
<dbReference type="PANTHER" id="PTHR47179">
    <property type="entry name" value="E3 UBIQUITIN-PROTEIN LIGASE SIS3"/>
    <property type="match status" value="1"/>
</dbReference>
<dbReference type="PANTHER" id="PTHR47179:SF1">
    <property type="entry name" value="E3 UBIQUITIN-PROTEIN LIGASE SIS3"/>
    <property type="match status" value="1"/>
</dbReference>
<dbReference type="Pfam" id="PF13639">
    <property type="entry name" value="zf-RING_2"/>
    <property type="match status" value="1"/>
</dbReference>
<dbReference type="SMART" id="SM00184">
    <property type="entry name" value="RING"/>
    <property type="match status" value="1"/>
</dbReference>
<dbReference type="SUPFAM" id="SSF57850">
    <property type="entry name" value="RING/U-box"/>
    <property type="match status" value="1"/>
</dbReference>
<dbReference type="PROSITE" id="PS50089">
    <property type="entry name" value="ZF_RING_2"/>
    <property type="match status" value="1"/>
</dbReference>
<name>SIS3_ARATH</name>
<reference key="1">
    <citation type="journal article" date="2000" name="Nature">
        <title>Sequence and analysis of chromosome 3 of the plant Arabidopsis thaliana.</title>
        <authorList>
            <person name="Salanoubat M."/>
            <person name="Lemcke K."/>
            <person name="Rieger M."/>
            <person name="Ansorge W."/>
            <person name="Unseld M."/>
            <person name="Fartmann B."/>
            <person name="Valle G."/>
            <person name="Bloecker H."/>
            <person name="Perez-Alonso M."/>
            <person name="Obermaier B."/>
            <person name="Delseny M."/>
            <person name="Boutry M."/>
            <person name="Grivell L.A."/>
            <person name="Mache R."/>
            <person name="Puigdomenech P."/>
            <person name="De Simone V."/>
            <person name="Choisne N."/>
            <person name="Artiguenave F."/>
            <person name="Robert C."/>
            <person name="Brottier P."/>
            <person name="Wincker P."/>
            <person name="Cattolico L."/>
            <person name="Weissenbach J."/>
            <person name="Saurin W."/>
            <person name="Quetier F."/>
            <person name="Schaefer M."/>
            <person name="Mueller-Auer S."/>
            <person name="Gabel C."/>
            <person name="Fuchs M."/>
            <person name="Benes V."/>
            <person name="Wurmbach E."/>
            <person name="Drzonek H."/>
            <person name="Erfle H."/>
            <person name="Jordan N."/>
            <person name="Bangert S."/>
            <person name="Wiedelmann R."/>
            <person name="Kranz H."/>
            <person name="Voss H."/>
            <person name="Holland R."/>
            <person name="Brandt P."/>
            <person name="Nyakatura G."/>
            <person name="Vezzi A."/>
            <person name="D'Angelo M."/>
            <person name="Pallavicini A."/>
            <person name="Toppo S."/>
            <person name="Simionati B."/>
            <person name="Conrad A."/>
            <person name="Hornischer K."/>
            <person name="Kauer G."/>
            <person name="Loehnert T.-H."/>
            <person name="Nordsiek G."/>
            <person name="Reichelt J."/>
            <person name="Scharfe M."/>
            <person name="Schoen O."/>
            <person name="Bargues M."/>
            <person name="Terol J."/>
            <person name="Climent J."/>
            <person name="Navarro P."/>
            <person name="Collado C."/>
            <person name="Perez-Perez A."/>
            <person name="Ottenwaelder B."/>
            <person name="Duchemin D."/>
            <person name="Cooke R."/>
            <person name="Laudie M."/>
            <person name="Berger-Llauro C."/>
            <person name="Purnelle B."/>
            <person name="Masuy D."/>
            <person name="de Haan M."/>
            <person name="Maarse A.C."/>
            <person name="Alcaraz J.-P."/>
            <person name="Cottet A."/>
            <person name="Casacuberta E."/>
            <person name="Monfort A."/>
            <person name="Argiriou A."/>
            <person name="Flores M."/>
            <person name="Liguori R."/>
            <person name="Vitale D."/>
            <person name="Mannhaupt G."/>
            <person name="Haase D."/>
            <person name="Schoof H."/>
            <person name="Rudd S."/>
            <person name="Zaccaria P."/>
            <person name="Mewes H.-W."/>
            <person name="Mayer K.F.X."/>
            <person name="Kaul S."/>
            <person name="Town C.D."/>
            <person name="Koo H.L."/>
            <person name="Tallon L.J."/>
            <person name="Jenkins J."/>
            <person name="Rooney T."/>
            <person name="Rizzo M."/>
            <person name="Walts A."/>
            <person name="Utterback T."/>
            <person name="Fujii C.Y."/>
            <person name="Shea T.P."/>
            <person name="Creasy T.H."/>
            <person name="Haas B."/>
            <person name="Maiti R."/>
            <person name="Wu D."/>
            <person name="Peterson J."/>
            <person name="Van Aken S."/>
            <person name="Pai G."/>
            <person name="Militscher J."/>
            <person name="Sellers P."/>
            <person name="Gill J.E."/>
            <person name="Feldblyum T.V."/>
            <person name="Preuss D."/>
            <person name="Lin X."/>
            <person name="Nierman W.C."/>
            <person name="Salzberg S.L."/>
            <person name="White O."/>
            <person name="Venter J.C."/>
            <person name="Fraser C.M."/>
            <person name="Kaneko T."/>
            <person name="Nakamura Y."/>
            <person name="Sato S."/>
            <person name="Kato T."/>
            <person name="Asamizu E."/>
            <person name="Sasamoto S."/>
            <person name="Kimura T."/>
            <person name="Idesawa K."/>
            <person name="Kawashima K."/>
            <person name="Kishida Y."/>
            <person name="Kiyokawa C."/>
            <person name="Kohara M."/>
            <person name="Matsumoto M."/>
            <person name="Matsuno A."/>
            <person name="Muraki A."/>
            <person name="Nakayama S."/>
            <person name="Nakazaki N."/>
            <person name="Shinpo S."/>
            <person name="Takeuchi C."/>
            <person name="Wada T."/>
            <person name="Watanabe A."/>
            <person name="Yamada M."/>
            <person name="Yasuda M."/>
            <person name="Tabata S."/>
        </authorList>
    </citation>
    <scope>NUCLEOTIDE SEQUENCE [LARGE SCALE GENOMIC DNA]</scope>
    <source>
        <strain>cv. Columbia</strain>
    </source>
</reference>
<reference key="2">
    <citation type="journal article" date="2017" name="Plant J.">
        <title>Araport11: a complete reannotation of the Arabidopsis thaliana reference genome.</title>
        <authorList>
            <person name="Cheng C.Y."/>
            <person name="Krishnakumar V."/>
            <person name="Chan A.P."/>
            <person name="Thibaud-Nissen F."/>
            <person name="Schobel S."/>
            <person name="Town C.D."/>
        </authorList>
    </citation>
    <scope>GENOME REANNOTATION</scope>
    <source>
        <strain>cv. Columbia</strain>
    </source>
</reference>
<reference key="3">
    <citation type="journal article" date="2002" name="Science">
        <title>Functional annotation of a full-length Arabidopsis cDNA collection.</title>
        <authorList>
            <person name="Seki M."/>
            <person name="Narusaka M."/>
            <person name="Kamiya A."/>
            <person name="Ishida J."/>
            <person name="Satou M."/>
            <person name="Sakurai T."/>
            <person name="Nakajima M."/>
            <person name="Enju A."/>
            <person name="Akiyama K."/>
            <person name="Oono Y."/>
            <person name="Muramatsu M."/>
            <person name="Hayashizaki Y."/>
            <person name="Kawai J."/>
            <person name="Carninci P."/>
            <person name="Itoh M."/>
            <person name="Ishii Y."/>
            <person name="Arakawa T."/>
            <person name="Shibata K."/>
            <person name="Shinagawa A."/>
            <person name="Shinozaki K."/>
        </authorList>
    </citation>
    <scope>NUCLEOTIDE SEQUENCE [LARGE SCALE MRNA]</scope>
    <source>
        <strain>cv. Columbia</strain>
    </source>
</reference>
<reference key="4">
    <citation type="journal article" date="2010" name="Plant Physiol.">
        <title>SUGAR-INSENSITIVE3, a RING E3 ligase, is a new player in plant sugar response.</title>
        <authorList>
            <person name="Huang Y."/>
            <person name="Li C.Y."/>
            <person name="Pattison D.L."/>
            <person name="Gray W.M."/>
            <person name="Park S."/>
            <person name="Gibson S.I."/>
        </authorList>
    </citation>
    <scope>FUNCTION</scope>
    <scope>TISSUE SPECIFICITY</scope>
    <scope>DISRUPTION PHENOTYPE</scope>
</reference>
<feature type="signal peptide" evidence="1">
    <location>
        <begin position="1"/>
        <end position="27"/>
    </location>
</feature>
<feature type="chain" id="PRO_0000395964" description="E3 ubiquitin-protein ligase SIS3">
    <location>
        <begin position="28"/>
        <end position="358"/>
    </location>
</feature>
<feature type="transmembrane region" description="Helical" evidence="1">
    <location>
        <begin position="40"/>
        <end position="60"/>
    </location>
</feature>
<feature type="transmembrane region" description="Helical" evidence="1">
    <location>
        <begin position="85"/>
        <end position="105"/>
    </location>
</feature>
<feature type="transmembrane region" description="Helical" evidence="1">
    <location>
        <begin position="125"/>
        <end position="145"/>
    </location>
</feature>
<feature type="zinc finger region" description="RING-type; atypical" evidence="2">
    <location>
        <begin position="235"/>
        <end position="276"/>
    </location>
</feature>
<feature type="region of interest" description="Disordered" evidence="3">
    <location>
        <begin position="336"/>
        <end position="358"/>
    </location>
</feature>
<feature type="sequence conflict" description="In Ref. 3; BAC42060." evidence="5" ref="3">
    <original>T</original>
    <variation>A</variation>
    <location>
        <position position="334"/>
    </location>
</feature>
<accession>Q8GYT9</accession>
<accession>Q9SU62</accession>
<gene>
    <name type="primary">SIS3</name>
    <name type="ordered locus">At3g47990</name>
    <name type="ORF">T17F15.140</name>
</gene>
<sequence>MAMRGVDFKWYDGFFLSMLATSVIIVAVNWNRYRACEYPLHIWIVVDYTTVFIFRVFMFVDNGLASGLGLDFGSQQRNAMFCGRVVVLSVLSLLLYPFLWAWTVIGTQWFTKSKTCLPEEGQKWGFLIWLMFSYCGLLCIAFICVGKWLTRRQVHLLRAQQGIPISEFGILVDMIRVPDWAFEAAGQEMRGISQDAATYHPGLYLTPAQTEAVEALIQELPKFRLKAVPDDCGECLICLEEFHIGHEVRGLPCAHNFHVECIDQWLRLNVKCPRCRCSVFPDLDLSALSNLQSSGTEQHSQVNTETSEARYIRSQPQSESYFLRVQSLIHPVHTDTALETAENGGVPPVLTDLSPSRR</sequence>
<organism>
    <name type="scientific">Arabidopsis thaliana</name>
    <name type="common">Mouse-ear cress</name>
    <dbReference type="NCBI Taxonomy" id="3702"/>
    <lineage>
        <taxon>Eukaryota</taxon>
        <taxon>Viridiplantae</taxon>
        <taxon>Streptophyta</taxon>
        <taxon>Embryophyta</taxon>
        <taxon>Tracheophyta</taxon>
        <taxon>Spermatophyta</taxon>
        <taxon>Magnoliopsida</taxon>
        <taxon>eudicotyledons</taxon>
        <taxon>Gunneridae</taxon>
        <taxon>Pentapetalae</taxon>
        <taxon>rosids</taxon>
        <taxon>malvids</taxon>
        <taxon>Brassicales</taxon>
        <taxon>Brassicaceae</taxon>
        <taxon>Camelineae</taxon>
        <taxon>Arabidopsis</taxon>
    </lineage>
</organism>
<proteinExistence type="evidence at transcript level"/>